<dbReference type="EC" id="2.9.1.1" evidence="1"/>
<dbReference type="EMBL" id="CP000802">
    <property type="protein sequence ID" value="ABV08005.1"/>
    <property type="molecule type" value="Genomic_DNA"/>
</dbReference>
<dbReference type="RefSeq" id="WP_000206275.1">
    <property type="nucleotide sequence ID" value="NC_009800.1"/>
</dbReference>
<dbReference type="SMR" id="A8A651"/>
<dbReference type="GeneID" id="75204641"/>
<dbReference type="KEGG" id="ecx:EcHS_A3796"/>
<dbReference type="HOGENOM" id="CLU_038142_1_0_6"/>
<dbReference type="UniPathway" id="UPA00906">
    <property type="reaction ID" value="UER00896"/>
</dbReference>
<dbReference type="GO" id="GO:0005737">
    <property type="term" value="C:cytoplasm"/>
    <property type="evidence" value="ECO:0007669"/>
    <property type="project" value="UniProtKB-SubCell"/>
</dbReference>
<dbReference type="GO" id="GO:0004125">
    <property type="term" value="F:L-seryl-tRNA(Sec) selenium transferase activity"/>
    <property type="evidence" value="ECO:0007669"/>
    <property type="project" value="UniProtKB-UniRule"/>
</dbReference>
<dbReference type="GO" id="GO:0001717">
    <property type="term" value="P:conversion of seryl-tRNAsec to selenocys-tRNAsec"/>
    <property type="evidence" value="ECO:0007669"/>
    <property type="project" value="UniProtKB-UniRule"/>
</dbReference>
<dbReference type="GO" id="GO:0001514">
    <property type="term" value="P:selenocysteine incorporation"/>
    <property type="evidence" value="ECO:0007669"/>
    <property type="project" value="UniProtKB-UniRule"/>
</dbReference>
<dbReference type="FunFam" id="3.40.640.10:FF:000028">
    <property type="entry name" value="L-seryl-tRNA(Sec) selenium transferase"/>
    <property type="match status" value="1"/>
</dbReference>
<dbReference type="FunFam" id="3.90.1150.180:FF:000001">
    <property type="entry name" value="L-seryl-tRNA(Sec) selenium transferase"/>
    <property type="match status" value="1"/>
</dbReference>
<dbReference type="Gene3D" id="3.90.1150.180">
    <property type="match status" value="1"/>
</dbReference>
<dbReference type="Gene3D" id="3.40.640.10">
    <property type="entry name" value="Type I PLP-dependent aspartate aminotransferase-like (Major domain)"/>
    <property type="match status" value="1"/>
</dbReference>
<dbReference type="HAMAP" id="MF_00423">
    <property type="entry name" value="SelA"/>
    <property type="match status" value="1"/>
</dbReference>
<dbReference type="InterPro" id="IPR015424">
    <property type="entry name" value="PyrdxlP-dep_Trfase"/>
</dbReference>
<dbReference type="InterPro" id="IPR015421">
    <property type="entry name" value="PyrdxlP-dep_Trfase_major"/>
</dbReference>
<dbReference type="InterPro" id="IPR018319">
    <property type="entry name" value="SelA-like"/>
</dbReference>
<dbReference type="InterPro" id="IPR004534">
    <property type="entry name" value="SelA_trans"/>
</dbReference>
<dbReference type="InterPro" id="IPR025862">
    <property type="entry name" value="SelA_trans_N_dom"/>
</dbReference>
<dbReference type="NCBIfam" id="TIGR00474">
    <property type="entry name" value="selA"/>
    <property type="match status" value="1"/>
</dbReference>
<dbReference type="PANTHER" id="PTHR32328">
    <property type="entry name" value="L-SERYL-TRNA(SEC) SELENIUM TRANSFERASE"/>
    <property type="match status" value="1"/>
</dbReference>
<dbReference type="PANTHER" id="PTHR32328:SF0">
    <property type="entry name" value="L-SERYL-TRNA(SEC) SELENIUM TRANSFERASE"/>
    <property type="match status" value="1"/>
</dbReference>
<dbReference type="Pfam" id="PF12390">
    <property type="entry name" value="Se-cys_synth_N"/>
    <property type="match status" value="1"/>
</dbReference>
<dbReference type="Pfam" id="PF03841">
    <property type="entry name" value="SelA"/>
    <property type="match status" value="1"/>
</dbReference>
<dbReference type="SUPFAM" id="SSF53383">
    <property type="entry name" value="PLP-dependent transferases"/>
    <property type="match status" value="1"/>
</dbReference>
<name>SELA_ECOHS</name>
<feature type="chain" id="PRO_1000060099" description="L-seryl-tRNA(Sec) selenium transferase">
    <location>
        <begin position="1"/>
        <end position="463"/>
    </location>
</feature>
<feature type="modified residue" description="N6-(pyridoxal phosphate)lysine" evidence="1">
    <location>
        <position position="295"/>
    </location>
</feature>
<proteinExistence type="inferred from homology"/>
<reference key="1">
    <citation type="journal article" date="2008" name="J. Bacteriol.">
        <title>The pangenome structure of Escherichia coli: comparative genomic analysis of E. coli commensal and pathogenic isolates.</title>
        <authorList>
            <person name="Rasko D.A."/>
            <person name="Rosovitz M.J."/>
            <person name="Myers G.S.A."/>
            <person name="Mongodin E.F."/>
            <person name="Fricke W.F."/>
            <person name="Gajer P."/>
            <person name="Crabtree J."/>
            <person name="Sebaihia M."/>
            <person name="Thomson N.R."/>
            <person name="Chaudhuri R."/>
            <person name="Henderson I.R."/>
            <person name="Sperandio V."/>
            <person name="Ravel J."/>
        </authorList>
    </citation>
    <scope>NUCLEOTIDE SEQUENCE [LARGE SCALE GENOMIC DNA]</scope>
    <source>
        <strain>HS</strain>
    </source>
</reference>
<protein>
    <recommendedName>
        <fullName evidence="1">L-seryl-tRNA(Sec) selenium transferase</fullName>
        <ecNumber evidence="1">2.9.1.1</ecNumber>
    </recommendedName>
    <alternativeName>
        <fullName evidence="1">Selenocysteine synthase</fullName>
        <shortName evidence="1">Sec synthase</shortName>
    </alternativeName>
    <alternativeName>
        <fullName evidence="1">Selenocysteinyl-tRNA(Sec) synthase</fullName>
    </alternativeName>
</protein>
<organism>
    <name type="scientific">Escherichia coli O9:H4 (strain HS)</name>
    <dbReference type="NCBI Taxonomy" id="331112"/>
    <lineage>
        <taxon>Bacteria</taxon>
        <taxon>Pseudomonadati</taxon>
        <taxon>Pseudomonadota</taxon>
        <taxon>Gammaproteobacteria</taxon>
        <taxon>Enterobacterales</taxon>
        <taxon>Enterobacteriaceae</taxon>
        <taxon>Escherichia</taxon>
    </lineage>
</organism>
<keyword id="KW-0963">Cytoplasm</keyword>
<keyword id="KW-0648">Protein biosynthesis</keyword>
<keyword id="KW-0663">Pyridoxal phosphate</keyword>
<keyword id="KW-0711">Selenium</keyword>
<keyword id="KW-0808">Transferase</keyword>
<sequence>MTTETRSLYSQLPAIDRLLRDSSFLSLRDTYGHTRVVELLRQMLDEAREVIRGSQTLPAWCENWAQEVDARLTKEAQSALRPVINLTGTVLHTNLGRALQAEAAVEAVAQAMRSPVTLEYDLDDAGRGHRDRALAQLLCRITGAEDACIVNNNAAAVLLMLAATASGKEVVVSRGELVEIGGAFRIPDVMRQAGCTLHEVGTTNRTHANDYRQAVNENTALLMKVHTSNYSIQGFTKAIDEAELVALGKELDVPVVTDLGSGSLVDLSQYGLPKEPMPQELIAAGVSLVSFSGDKLLGGPQAGIIVGKKEMIARLQSHPLKRALRADKMTLAALEATLRLYLHPEALSEKLPTLRLLTRSAEVIQIQAQRLQAPLAAHYGAEFAVQVMPCLSQIGSGSLPVDRLPSAALTFTPHDGRGSHLESLAARWRELPVPVIGRIYDGRLWLDLRCLEDEQRFLEMLLK</sequence>
<evidence type="ECO:0000255" key="1">
    <source>
        <dbReference type="HAMAP-Rule" id="MF_00423"/>
    </source>
</evidence>
<accession>A8A651</accession>
<comment type="function">
    <text evidence="1">Converts seryl-tRNA(Sec) to selenocysteinyl-tRNA(Sec) required for selenoprotein biosynthesis.</text>
</comment>
<comment type="catalytic activity">
    <reaction evidence="1">
        <text>L-seryl-tRNA(Sec) + selenophosphate + H(+) = L-selenocysteinyl-tRNA(Sec) + phosphate</text>
        <dbReference type="Rhea" id="RHEA:22728"/>
        <dbReference type="Rhea" id="RHEA-COMP:9742"/>
        <dbReference type="Rhea" id="RHEA-COMP:9743"/>
        <dbReference type="ChEBI" id="CHEBI:15378"/>
        <dbReference type="ChEBI" id="CHEBI:16144"/>
        <dbReference type="ChEBI" id="CHEBI:43474"/>
        <dbReference type="ChEBI" id="CHEBI:78533"/>
        <dbReference type="ChEBI" id="CHEBI:78573"/>
        <dbReference type="EC" id="2.9.1.1"/>
    </reaction>
</comment>
<comment type="cofactor">
    <cofactor evidence="1">
        <name>pyridoxal 5'-phosphate</name>
        <dbReference type="ChEBI" id="CHEBI:597326"/>
    </cofactor>
</comment>
<comment type="pathway">
    <text evidence="1">Aminoacyl-tRNA biosynthesis; selenocysteinyl-tRNA(Sec) biosynthesis; selenocysteinyl-tRNA(Sec) from L-seryl-tRNA(Sec) (bacterial route): step 1/1.</text>
</comment>
<comment type="subunit">
    <text evidence="1">Homodecamer; pentamer of dimers. Binds only one seryl-tRNA(Sec) per dimer.</text>
</comment>
<comment type="subcellular location">
    <subcellularLocation>
        <location evidence="1">Cytoplasm</location>
    </subcellularLocation>
</comment>
<comment type="similarity">
    <text evidence="1">Belongs to the SelA family.</text>
</comment>
<gene>
    <name evidence="1" type="primary">selA</name>
    <name type="ordered locus">EcHS_A3796</name>
</gene>